<gene>
    <name type="primary">NS1</name>
</gene>
<organismHost>
    <name type="scientific">Sus scrofa</name>
    <name type="common">Pig</name>
    <dbReference type="NCBI Taxonomy" id="9823"/>
</organismHost>
<name>NS1_PAVPK</name>
<keyword id="KW-0067">ATP-binding</keyword>
<keyword id="KW-0190">Covalent protein-DNA linkage</keyword>
<keyword id="KW-0235">DNA replication</keyword>
<keyword id="KW-0238">DNA-binding</keyword>
<keyword id="KW-0255">Endonuclease</keyword>
<keyword id="KW-1078">G1/S host cell cycle checkpoint dysregulation by virus</keyword>
<keyword id="KW-0347">Helicase</keyword>
<keyword id="KW-1079">Host G2/M cell cycle arrest by virus</keyword>
<keyword id="KW-1048">Host nucleus</keyword>
<keyword id="KW-0945">Host-virus interaction</keyword>
<keyword id="KW-0378">Hydrolase</keyword>
<keyword id="KW-0460">Magnesium</keyword>
<keyword id="KW-0479">Metal-binding</keyword>
<keyword id="KW-1119">Modulation of host cell apoptosis by virus</keyword>
<keyword id="KW-1121">Modulation of host cell cycle by virus</keyword>
<keyword id="KW-0540">Nuclease</keyword>
<keyword id="KW-0547">Nucleotide-binding</keyword>
<keyword id="KW-0804">Transcription</keyword>
<keyword id="KW-0805">Transcription regulation</keyword>
<keyword id="KW-1194">Viral DNA replication</keyword>
<keyword id="KW-0231">Viral genome packaging</keyword>
<keyword id="KW-1188">Viral release from host cell</keyword>
<organism>
    <name type="scientific">Porcine parvovirus (strain Kresse)</name>
    <name type="common">PPV</name>
    <dbReference type="NCBI Taxonomy" id="73487"/>
    <lineage>
        <taxon>Viruses</taxon>
        <taxon>Monodnaviria</taxon>
        <taxon>Shotokuvirae</taxon>
        <taxon>Cossaviricota</taxon>
        <taxon>Quintoviricetes</taxon>
        <taxon>Piccovirales</taxon>
        <taxon>Parvoviridae</taxon>
        <taxon>Parvovirinae</taxon>
        <taxon>Protoparvovirus</taxon>
        <taxon>Protoparvovirus ungulate1</taxon>
    </lineage>
</organism>
<sequence>MAAGNTYSEEVLKATNWLQDNAQKEAFSYVFKTQKVNLNGKEIAWNNYNKDTTDAEMINLQRGAETSWDQATDMEWESEIDSLTKRQVLIFDSLVKKCLFEGILQKNLSPSDCYWFIQHEHGQDTGYHCHVLLGGKGLQQAMGKWFRKQLNNLWSRWLIMQCKVPLTPVERIKLRELAEDGEWVSLLTYTHKQTKKQYTKMTHFGNMIAYYFLNKKRKTTEREHGYYLSSDSGFMTNFLKEGERHLVSHLFTEANKPETVETTVTTAQEAKRGRIQTKKEVSIKCTIRDLVNKRCTSIEDWMMTDPDSYIEMMAQTGGENLIKNTLEITTLTLARTKTAYDLILEKAKPSMLPTFNISNTRTCKIFSMHNWNYIKVCHAITCVLNRQGGKRNTILFHGPASTGKSIIAQHIANLVGNVGCYNAANVNFPFNDCTNKNLIWIEEAGNFSNQVNQFKAICSGQTIRIDQKGKGSKQIEPTPVIMTTNEDITKVRIGCEERPEHTQPIRDRMLNINLTRKLPGDFGLLEETEWPLICAWLVKKGYQATMASYMHHWGNVPDWSEKWEEPKMQTPINTPTDSQISTSVKTSPADNNYAATPIQEDLDLALALEPWSEPTTPTFTNLHLTPTPPDSAIRTPSPTWSEIETDIRACFGENCAPTTNLE</sequence>
<feature type="chain" id="PRO_0000222472" description="Initiator protein NS1">
    <location>
        <begin position="1"/>
        <end position="662"/>
    </location>
</feature>
<feature type="domain" description="PV NS1-Nuc" evidence="5">
    <location>
        <begin position="22"/>
        <end position="262"/>
    </location>
</feature>
<feature type="domain" description="SF3 helicase" evidence="4">
    <location>
        <begin position="372"/>
        <end position="527"/>
    </location>
</feature>
<feature type="region of interest" description="DNA-binding" evidence="2">
    <location>
        <begin position="2"/>
        <end position="275"/>
    </location>
</feature>
<feature type="region of interest" description="Ori-binding" evidence="2">
    <location>
        <begin position="192"/>
        <end position="196"/>
    </location>
</feature>
<feature type="short sequence motif" description="RCR-2" evidence="5">
    <location>
        <begin position="128"/>
        <end position="130"/>
    </location>
</feature>
<feature type="short sequence motif" description="RCR-3" evidence="5">
    <location>
        <begin position="211"/>
        <end position="215"/>
    </location>
</feature>
<feature type="active site" description="For nuclease activity" evidence="5">
    <location>
        <position position="211"/>
    </location>
</feature>
<feature type="binding site" evidence="5">
    <location>
        <position position="120"/>
    </location>
    <ligand>
        <name>a divalent metal cation</name>
        <dbReference type="ChEBI" id="CHEBI:60240"/>
    </ligand>
</feature>
<feature type="binding site" evidence="5">
    <location>
        <position position="128"/>
    </location>
    <ligand>
        <name>a divalent metal cation</name>
        <dbReference type="ChEBI" id="CHEBI:60240"/>
    </ligand>
</feature>
<feature type="binding site" evidence="5">
    <location>
        <position position="130"/>
    </location>
    <ligand>
        <name>a divalent metal cation</name>
        <dbReference type="ChEBI" id="CHEBI:60240"/>
    </ligand>
</feature>
<feature type="binding site" evidence="4">
    <location>
        <begin position="398"/>
        <end position="405"/>
    </location>
    <ligand>
        <name>ATP</name>
        <dbReference type="ChEBI" id="CHEBI:30616"/>
    </ligand>
</feature>
<comment type="function">
    <text evidence="2">Multifunctional protein which displays endonuclease and helicase activities required for initiating and directing viral DNA replication. Also plays a role in viral packaging and transactivation of several promoters. Binds site-specifically to 2-3 approximate tandem copies within the origins of replication (Ori), unwinds this hairpin region and nicks one DNA strand thereby initiating the rolling circle replication (RCR). Cooperatively binds Ori with host PIF and probably other host factors, which activate the nickase function of NS1. Becomes covalently attached to the 5' end of the nick and provides a 3'OH for priming DNA synthesis. The helicase activity unwinds DNA in a 3'-5' direction on the longer strand. Inhibits the host cell cycle during the G1/S transition, the S-phase, and the G2/M transition. These arrests may provide essential cellular factors for viral DNA replication. Promotes apoptosis in host cell.</text>
</comment>
<comment type="catalytic activity">
    <reaction evidence="2">
        <text>ATP + H2O = ADP + phosphate + H(+)</text>
        <dbReference type="Rhea" id="RHEA:13065"/>
        <dbReference type="ChEBI" id="CHEBI:15377"/>
        <dbReference type="ChEBI" id="CHEBI:15378"/>
        <dbReference type="ChEBI" id="CHEBI:30616"/>
        <dbReference type="ChEBI" id="CHEBI:43474"/>
        <dbReference type="ChEBI" id="CHEBI:456216"/>
        <dbReference type="EC" id="3.6.4.12"/>
    </reaction>
</comment>
<comment type="cofactor">
    <cofactor evidence="2">
        <name>Mg(2+)</name>
        <dbReference type="ChEBI" id="CHEBI:18420"/>
    </cofactor>
    <text evidence="2">The endonuclease active site can probably bind other divalent cations.</text>
</comment>
<comment type="subunit">
    <text evidence="3">Homooligomer; when bound to DNA.</text>
</comment>
<comment type="subcellular location">
    <subcellularLocation>
        <location evidence="1">Host nucleus</location>
    </subcellularLocation>
</comment>
<comment type="domain">
    <text evidence="2 3">In the N-terminus, the endonuclease region is involved in binding to the origin of replication. In the middle, there are the ATPase and helicase activities (By similarity). The C-terminus probably contains a transactivation domain (By similarity).</text>
</comment>
<comment type="PTM">
    <text evidence="2">Phosphorylated.</text>
</comment>
<comment type="similarity">
    <text evidence="6">Belongs to the parvoviruses initiator protein NS1 family.</text>
</comment>
<proteinExistence type="inferred from homology"/>
<reference key="1">
    <citation type="journal article" date="1996" name="J. Virol.">
        <title>Genome organization of the Kresse strain of porcine parvovirus: identification of the allotropic determinant and comparison with those of NADL-2 and field isolates.</title>
        <authorList>
            <person name="Bergeron J."/>
            <person name="Hebert B."/>
            <person name="Tijssen P."/>
        </authorList>
    </citation>
    <scope>NUCLEOTIDE SEQUENCE [GENOMIC DNA]</scope>
</reference>
<reference key="2">
    <citation type="journal article" date="1993" name="Virology">
        <title>Genomic organization and mapping of transcription and translation products of the NADL-2 strain of porcine parvovirus.</title>
        <authorList>
            <person name="Bergeron J."/>
            <person name="Menezes J."/>
            <person name="Tijssen P."/>
        </authorList>
    </citation>
    <scope>NUCLEOTIDE SEQUENCE</scope>
</reference>
<accession>P52502</accession>
<dbReference type="EC" id="3.1.21.-" evidence="3"/>
<dbReference type="EC" id="3.6.4.12" evidence="3"/>
<dbReference type="EMBL" id="U44978">
    <property type="protein sequence ID" value="AAC40229.1"/>
    <property type="molecule type" value="Genomic_DNA"/>
</dbReference>
<dbReference type="EMBL" id="L23427">
    <property type="status" value="NOT_ANNOTATED_CDS"/>
    <property type="molecule type" value="Unassigned_DNA"/>
</dbReference>
<dbReference type="PIR" id="A36217">
    <property type="entry name" value="UYPVNA"/>
</dbReference>
<dbReference type="SMR" id="P52502"/>
<dbReference type="KEGG" id="vg:1489594"/>
<dbReference type="Proteomes" id="UP000000468">
    <property type="component" value="Genome"/>
</dbReference>
<dbReference type="GO" id="GO:0042025">
    <property type="term" value="C:host cell nucleus"/>
    <property type="evidence" value="ECO:0007669"/>
    <property type="project" value="UniProtKB-SubCell"/>
</dbReference>
<dbReference type="GO" id="GO:0005524">
    <property type="term" value="F:ATP binding"/>
    <property type="evidence" value="ECO:0007669"/>
    <property type="project" value="UniProtKB-KW"/>
</dbReference>
<dbReference type="GO" id="GO:0016887">
    <property type="term" value="F:ATP hydrolysis activity"/>
    <property type="evidence" value="ECO:0007669"/>
    <property type="project" value="RHEA"/>
</dbReference>
<dbReference type="GO" id="GO:0003677">
    <property type="term" value="F:DNA binding"/>
    <property type="evidence" value="ECO:0007669"/>
    <property type="project" value="UniProtKB-KW"/>
</dbReference>
<dbReference type="GO" id="GO:0004519">
    <property type="term" value="F:endonuclease activity"/>
    <property type="evidence" value="ECO:0007669"/>
    <property type="project" value="UniProtKB-KW"/>
</dbReference>
<dbReference type="GO" id="GO:0004386">
    <property type="term" value="F:helicase activity"/>
    <property type="evidence" value="ECO:0007669"/>
    <property type="project" value="UniProtKB-KW"/>
</dbReference>
<dbReference type="GO" id="GO:0046872">
    <property type="term" value="F:metal ion binding"/>
    <property type="evidence" value="ECO:0007669"/>
    <property type="project" value="UniProtKB-KW"/>
</dbReference>
<dbReference type="GO" id="GO:0006260">
    <property type="term" value="P:DNA replication"/>
    <property type="evidence" value="ECO:0007669"/>
    <property type="project" value="UniProtKB-KW"/>
</dbReference>
<dbReference type="GO" id="GO:0039592">
    <property type="term" value="P:symbiont-mediated arrest of host cell cycle during G2/M transition"/>
    <property type="evidence" value="ECO:0007669"/>
    <property type="project" value="UniProtKB-KW"/>
</dbReference>
<dbReference type="GO" id="GO:0052150">
    <property type="term" value="P:symbiont-mediated perturbation of host apoptosis"/>
    <property type="evidence" value="ECO:0007669"/>
    <property type="project" value="UniProtKB-KW"/>
</dbReference>
<dbReference type="GO" id="GO:0039645">
    <property type="term" value="P:symbiont-mediated perturbation of host cell cycle G1/S transition checkpoint"/>
    <property type="evidence" value="ECO:0007669"/>
    <property type="project" value="UniProtKB-KW"/>
</dbReference>
<dbReference type="GO" id="GO:0039693">
    <property type="term" value="P:viral DNA genome replication"/>
    <property type="evidence" value="ECO:0007669"/>
    <property type="project" value="UniProtKB-KW"/>
</dbReference>
<dbReference type="Gene3D" id="3.40.1310.20">
    <property type="match status" value="1"/>
</dbReference>
<dbReference type="Gene3D" id="3.40.50.300">
    <property type="entry name" value="P-loop containing nucleotide triphosphate hydrolases"/>
    <property type="match status" value="1"/>
</dbReference>
<dbReference type="InterPro" id="IPR014015">
    <property type="entry name" value="Helicase_SF3_DNA-vir"/>
</dbReference>
<dbReference type="InterPro" id="IPR027417">
    <property type="entry name" value="P-loop_NTPase"/>
</dbReference>
<dbReference type="InterPro" id="IPR021972">
    <property type="entry name" value="Parvovirus_NS1_C"/>
</dbReference>
<dbReference type="InterPro" id="IPR001257">
    <property type="entry name" value="Parvovirus_NS1_helicase"/>
</dbReference>
<dbReference type="InterPro" id="IPR021076">
    <property type="entry name" value="Parvovirus_NS1_N"/>
</dbReference>
<dbReference type="InterPro" id="IPR049901">
    <property type="entry name" value="PV_NS1-NUC"/>
</dbReference>
<dbReference type="Pfam" id="PF12117">
    <property type="entry name" value="NS1_C"/>
    <property type="match status" value="1"/>
</dbReference>
<dbReference type="Pfam" id="PF01057">
    <property type="entry name" value="Parvo_NS1"/>
    <property type="match status" value="1"/>
</dbReference>
<dbReference type="Pfam" id="PF12433">
    <property type="entry name" value="PV_NSP1"/>
    <property type="match status" value="1"/>
</dbReference>
<dbReference type="SUPFAM" id="SSF55464">
    <property type="entry name" value="Origin of replication-binding domain, RBD-like"/>
    <property type="match status" value="1"/>
</dbReference>
<dbReference type="SUPFAM" id="SSF52540">
    <property type="entry name" value="P-loop containing nucleoside triphosphate hydrolases"/>
    <property type="match status" value="1"/>
</dbReference>
<dbReference type="PROSITE" id="PS52022">
    <property type="entry name" value="PV_NS1_NUC"/>
    <property type="match status" value="1"/>
</dbReference>
<dbReference type="PROSITE" id="PS51206">
    <property type="entry name" value="SF3_HELICASE_1"/>
    <property type="match status" value="1"/>
</dbReference>
<protein>
    <recommendedName>
        <fullName evidence="2">Initiator protein NS1</fullName>
        <shortName>NS1</shortName>
        <ecNumber evidence="3">3.1.21.-</ecNumber>
        <ecNumber evidence="3">3.6.4.12</ecNumber>
    </recommendedName>
    <alternativeName>
        <fullName>NCVP1</fullName>
    </alternativeName>
    <alternativeName>
        <fullName>Non-capsid protein NS-1</fullName>
    </alternativeName>
    <alternativeName>
        <fullName>Non-structural protein 1</fullName>
    </alternativeName>
    <alternativeName>
        <fullName>Non-structural protein NS1</fullName>
    </alternativeName>
</protein>
<evidence type="ECO:0000250" key="1">
    <source>
        <dbReference type="UniProtKB" id="D0EZM8"/>
    </source>
</evidence>
<evidence type="ECO:0000250" key="2">
    <source>
        <dbReference type="UniProtKB" id="P03134"/>
    </source>
</evidence>
<evidence type="ECO:0000250" key="3">
    <source>
        <dbReference type="UniProtKB" id="Q9PZT1"/>
    </source>
</evidence>
<evidence type="ECO:0000255" key="4">
    <source>
        <dbReference type="PROSITE-ProRule" id="PRU00551"/>
    </source>
</evidence>
<evidence type="ECO:0000255" key="5">
    <source>
        <dbReference type="PROSITE-ProRule" id="PRU01366"/>
    </source>
</evidence>
<evidence type="ECO:0000305" key="6"/>